<evidence type="ECO:0000255" key="1">
    <source>
        <dbReference type="HAMAP-Rule" id="MF_03137"/>
    </source>
</evidence>
<evidence type="ECO:0000305" key="2"/>
<accession>B3RHG9</accession>
<protein>
    <recommendedName>
        <fullName evidence="1">Translation factor GUF1, mitochondrial</fullName>
        <ecNumber>3.6.5.-</ecNumber>
    </recommendedName>
    <alternativeName>
        <fullName evidence="1">Elongation factor 4 homolog</fullName>
        <shortName evidence="1">EF-4</shortName>
    </alternativeName>
    <alternativeName>
        <fullName evidence="1">GTPase GUF1</fullName>
    </alternativeName>
    <alternativeName>
        <fullName evidence="1">Ribosomal back-translocase</fullName>
    </alternativeName>
</protein>
<organism>
    <name type="scientific">Saccharomyces cerevisiae (strain RM11-1a)</name>
    <name type="common">Baker's yeast</name>
    <dbReference type="NCBI Taxonomy" id="285006"/>
    <lineage>
        <taxon>Eukaryota</taxon>
        <taxon>Fungi</taxon>
        <taxon>Dikarya</taxon>
        <taxon>Ascomycota</taxon>
        <taxon>Saccharomycotina</taxon>
        <taxon>Saccharomycetes</taxon>
        <taxon>Saccharomycetales</taxon>
        <taxon>Saccharomycetaceae</taxon>
        <taxon>Saccharomyces</taxon>
    </lineage>
</organism>
<comment type="function">
    <text evidence="1">Promotes mitochondrial protein synthesis. May act as a fidelity factor of the translation reaction, by catalyzing a one-codon backward translocation of tRNAs on improperly translocated ribosomes. Binds to mitochondrial ribosomes in a GTP-dependent manner.</text>
</comment>
<comment type="catalytic activity">
    <reaction evidence="1">
        <text>GTP + H2O = GDP + phosphate + H(+)</text>
        <dbReference type="Rhea" id="RHEA:19669"/>
        <dbReference type="ChEBI" id="CHEBI:15377"/>
        <dbReference type="ChEBI" id="CHEBI:15378"/>
        <dbReference type="ChEBI" id="CHEBI:37565"/>
        <dbReference type="ChEBI" id="CHEBI:43474"/>
        <dbReference type="ChEBI" id="CHEBI:58189"/>
    </reaction>
</comment>
<comment type="subcellular location">
    <subcellularLocation>
        <location evidence="1">Mitochondrion inner membrane</location>
        <topology evidence="1">Peripheral membrane protein</topology>
        <orientation evidence="1">Matrix side</orientation>
    </subcellularLocation>
</comment>
<comment type="miscellaneous">
    <text evidence="1">This protein may be expected to contain an N-terminal transit peptide but none has been predicted.</text>
</comment>
<comment type="similarity">
    <text evidence="2">Belongs to the TRAFAC class translation factor GTPase superfamily. Classic translation factor GTPase family. LepA subfamily.</text>
</comment>
<dbReference type="EC" id="3.6.5.-"/>
<dbReference type="EMBL" id="DS981519">
    <property type="protein sequence ID" value="EDV08613.1"/>
    <property type="molecule type" value="Genomic_DNA"/>
</dbReference>
<dbReference type="SMR" id="B3RHG9"/>
<dbReference type="HOGENOM" id="CLU_009995_3_1_1"/>
<dbReference type="OrthoDB" id="19201at4893"/>
<dbReference type="Proteomes" id="UP000008335">
    <property type="component" value="Unassembled WGS sequence"/>
</dbReference>
<dbReference type="GO" id="GO:0005743">
    <property type="term" value="C:mitochondrial inner membrane"/>
    <property type="evidence" value="ECO:0007669"/>
    <property type="project" value="UniProtKB-SubCell"/>
</dbReference>
<dbReference type="GO" id="GO:0005759">
    <property type="term" value="C:mitochondrial matrix"/>
    <property type="evidence" value="ECO:0007669"/>
    <property type="project" value="UniProtKB-UniRule"/>
</dbReference>
<dbReference type="GO" id="GO:0005525">
    <property type="term" value="F:GTP binding"/>
    <property type="evidence" value="ECO:0007669"/>
    <property type="project" value="UniProtKB-UniRule"/>
</dbReference>
<dbReference type="GO" id="GO:0003924">
    <property type="term" value="F:GTPase activity"/>
    <property type="evidence" value="ECO:0007669"/>
    <property type="project" value="UniProtKB-UniRule"/>
</dbReference>
<dbReference type="GO" id="GO:0097177">
    <property type="term" value="F:mitochondrial ribosome binding"/>
    <property type="evidence" value="ECO:0007669"/>
    <property type="project" value="TreeGrafter"/>
</dbReference>
<dbReference type="GO" id="GO:0045727">
    <property type="term" value="P:positive regulation of translation"/>
    <property type="evidence" value="ECO:0007669"/>
    <property type="project" value="UniProtKB-UniRule"/>
</dbReference>
<dbReference type="GO" id="GO:0006412">
    <property type="term" value="P:translation"/>
    <property type="evidence" value="ECO:0007669"/>
    <property type="project" value="UniProtKB-KW"/>
</dbReference>
<dbReference type="CDD" id="cd03699">
    <property type="entry name" value="EF4_II"/>
    <property type="match status" value="1"/>
</dbReference>
<dbReference type="CDD" id="cd16260">
    <property type="entry name" value="EF4_III"/>
    <property type="match status" value="1"/>
</dbReference>
<dbReference type="CDD" id="cd01890">
    <property type="entry name" value="LepA"/>
    <property type="match status" value="1"/>
</dbReference>
<dbReference type="CDD" id="cd03709">
    <property type="entry name" value="lepA_C"/>
    <property type="match status" value="1"/>
</dbReference>
<dbReference type="FunFam" id="3.40.50.300:FF:000078">
    <property type="entry name" value="Elongation factor 4"/>
    <property type="match status" value="1"/>
</dbReference>
<dbReference type="FunFam" id="2.40.30.10:FF:000015">
    <property type="entry name" value="Translation factor GUF1, mitochondrial"/>
    <property type="match status" value="1"/>
</dbReference>
<dbReference type="FunFam" id="3.30.70.240:FF:000007">
    <property type="entry name" value="Translation factor GUF1, mitochondrial"/>
    <property type="match status" value="1"/>
</dbReference>
<dbReference type="FunFam" id="3.30.70.2570:FF:000001">
    <property type="entry name" value="Translation factor GUF1, mitochondrial"/>
    <property type="match status" value="1"/>
</dbReference>
<dbReference type="FunFam" id="3.30.70.870:FF:000004">
    <property type="entry name" value="Translation factor GUF1, mitochondrial"/>
    <property type="match status" value="1"/>
</dbReference>
<dbReference type="Gene3D" id="3.30.70.240">
    <property type="match status" value="1"/>
</dbReference>
<dbReference type="Gene3D" id="3.30.70.2570">
    <property type="entry name" value="Elongation factor 4, C-terminal domain"/>
    <property type="match status" value="1"/>
</dbReference>
<dbReference type="Gene3D" id="3.30.70.870">
    <property type="entry name" value="Elongation Factor G (Translational Gtpase), domain 3"/>
    <property type="match status" value="1"/>
</dbReference>
<dbReference type="Gene3D" id="3.40.50.300">
    <property type="entry name" value="P-loop containing nucleotide triphosphate hydrolases"/>
    <property type="match status" value="1"/>
</dbReference>
<dbReference type="Gene3D" id="2.40.30.10">
    <property type="entry name" value="Translation factors"/>
    <property type="match status" value="1"/>
</dbReference>
<dbReference type="HAMAP" id="MF_00071">
    <property type="entry name" value="LepA"/>
    <property type="match status" value="1"/>
</dbReference>
<dbReference type="InterPro" id="IPR006297">
    <property type="entry name" value="EF-4"/>
</dbReference>
<dbReference type="InterPro" id="IPR035647">
    <property type="entry name" value="EFG_III/V"/>
</dbReference>
<dbReference type="InterPro" id="IPR000640">
    <property type="entry name" value="EFG_V-like"/>
</dbReference>
<dbReference type="InterPro" id="IPR004161">
    <property type="entry name" value="EFTu-like_2"/>
</dbReference>
<dbReference type="InterPro" id="IPR031157">
    <property type="entry name" value="G_TR_CS"/>
</dbReference>
<dbReference type="InterPro" id="IPR038363">
    <property type="entry name" value="LepA_C_sf"/>
</dbReference>
<dbReference type="InterPro" id="IPR013842">
    <property type="entry name" value="LepA_CTD"/>
</dbReference>
<dbReference type="InterPro" id="IPR035654">
    <property type="entry name" value="LepA_IV"/>
</dbReference>
<dbReference type="InterPro" id="IPR027417">
    <property type="entry name" value="P-loop_NTPase"/>
</dbReference>
<dbReference type="InterPro" id="IPR005225">
    <property type="entry name" value="Small_GTP-bd"/>
</dbReference>
<dbReference type="InterPro" id="IPR000795">
    <property type="entry name" value="T_Tr_GTP-bd_dom"/>
</dbReference>
<dbReference type="NCBIfam" id="TIGR01393">
    <property type="entry name" value="lepA"/>
    <property type="match status" value="1"/>
</dbReference>
<dbReference type="NCBIfam" id="TIGR00231">
    <property type="entry name" value="small_GTP"/>
    <property type="match status" value="1"/>
</dbReference>
<dbReference type="PANTHER" id="PTHR43512:SF7">
    <property type="entry name" value="TRANSLATION FACTOR GUF1, MITOCHONDRIAL"/>
    <property type="match status" value="1"/>
</dbReference>
<dbReference type="PANTHER" id="PTHR43512">
    <property type="entry name" value="TRANSLATION FACTOR GUF1-RELATED"/>
    <property type="match status" value="1"/>
</dbReference>
<dbReference type="Pfam" id="PF00679">
    <property type="entry name" value="EFG_C"/>
    <property type="match status" value="1"/>
</dbReference>
<dbReference type="Pfam" id="PF00009">
    <property type="entry name" value="GTP_EFTU"/>
    <property type="match status" value="1"/>
</dbReference>
<dbReference type="Pfam" id="PF03144">
    <property type="entry name" value="GTP_EFTU_D2"/>
    <property type="match status" value="1"/>
</dbReference>
<dbReference type="Pfam" id="PF06421">
    <property type="entry name" value="LepA_C"/>
    <property type="match status" value="1"/>
</dbReference>
<dbReference type="PRINTS" id="PR00315">
    <property type="entry name" value="ELONGATNFCT"/>
</dbReference>
<dbReference type="SUPFAM" id="SSF54980">
    <property type="entry name" value="EF-G C-terminal domain-like"/>
    <property type="match status" value="2"/>
</dbReference>
<dbReference type="SUPFAM" id="SSF52540">
    <property type="entry name" value="P-loop containing nucleoside triphosphate hydrolases"/>
    <property type="match status" value="1"/>
</dbReference>
<dbReference type="PROSITE" id="PS00301">
    <property type="entry name" value="G_TR_1"/>
    <property type="match status" value="1"/>
</dbReference>
<dbReference type="PROSITE" id="PS51722">
    <property type="entry name" value="G_TR_2"/>
    <property type="match status" value="1"/>
</dbReference>
<reference key="1">
    <citation type="submission" date="2005-03" db="EMBL/GenBank/DDBJ databases">
        <title>Annotation of the Saccharomyces cerevisiae RM11-1a genome.</title>
        <authorList>
            <consortium name="The Broad Institute Genome Sequencing Platform"/>
            <person name="Birren B.W."/>
            <person name="Lander E.S."/>
            <person name="Galagan J.E."/>
            <person name="Nusbaum C."/>
            <person name="Devon K."/>
            <person name="Cuomo C."/>
            <person name="Jaffe D.B."/>
            <person name="Butler J."/>
            <person name="Alvarez P."/>
            <person name="Gnerre S."/>
            <person name="Grabherr M."/>
            <person name="Kleber M."/>
            <person name="Mauceli E.W."/>
            <person name="Brockman W."/>
            <person name="MacCallum I.A."/>
            <person name="Rounsley S."/>
            <person name="Young S.K."/>
            <person name="LaButti K."/>
            <person name="Pushparaj V."/>
            <person name="DeCaprio D."/>
            <person name="Crawford M."/>
            <person name="Koehrsen M."/>
            <person name="Engels R."/>
            <person name="Montgomery P."/>
            <person name="Pearson M."/>
            <person name="Howarth C."/>
            <person name="Larson L."/>
            <person name="Luoma S."/>
            <person name="White J."/>
            <person name="O'Leary S."/>
            <person name="Kodira C.D."/>
            <person name="Zeng Q."/>
            <person name="Yandava C."/>
            <person name="Alvarado L."/>
            <person name="Pratt S."/>
            <person name="Kruglyak L."/>
        </authorList>
    </citation>
    <scope>NUCLEOTIDE SEQUENCE [LARGE SCALE GENOMIC DNA]</scope>
    <source>
        <strain>RM11-1a</strain>
    </source>
</reference>
<gene>
    <name evidence="1" type="primary">GUF1</name>
    <name type="ORF">SCRG_04239</name>
</gene>
<keyword id="KW-0342">GTP-binding</keyword>
<keyword id="KW-0378">Hydrolase</keyword>
<keyword id="KW-0472">Membrane</keyword>
<keyword id="KW-0496">Mitochondrion</keyword>
<keyword id="KW-0999">Mitochondrion inner membrane</keyword>
<keyword id="KW-0547">Nucleotide-binding</keyword>
<keyword id="KW-0648">Protein biosynthesis</keyword>
<sequence>MLKFRIRPVRHIRCYKRHAYFLRYNHTTTPAQKLQAQIEQIPLENYRNFSIVAHVDHGKSTLSDRLLEITHVIDPNARNKQVLDKLEVERERGITIKAQTCSMFYKDKRTGKNYLLHLIDTPGHVDFRGEVSRSYASCGGAILLVDASQGIQAQTVANFYLAFSLGLKLIPVINKIDLNFTDVKQVKDQIVNNFELPEEDIIGVSAKTGLNVEELLLPAIIDRIPPPTGRPDKPFRALLVDSWYDAYLGAVLLVNIVDGFVRKNDKVICAQTKEKYEVKDIGIMYPDRTSTGTLKTGQVGYLVLGMKDSKEAKIGDTIMHLSKVNETEVLPGFEEQKPMVFVGAFPADGIEFKAMDDDMSRLVLNDRSVTLERETSNALGQGWRLGFLGSLHASVFRERLEKEYGSKLIITQPTVPYLVEFTDGKKKLITNPDEFPDGATKRVNVAAFHEPFIEAVMTLPQEYLGSVIRLCDSNRGEQIDITYLNTNGQVMLKYYLPLSHLVDDFFGKLKSVSRGFASLDYEDAGYRISDVVKLQLLVNGNAIDALSRVLHKSEVERVGREWVKKFKEYVKSQLYEVVIQARANNKIIARETIKARRKDVLQKLHASDVSRRKKLLAKQKEGKKHMKTVGNIQINQEAYQAFLRR</sequence>
<name>GUF1_YEAS1</name>
<feature type="chain" id="PRO_0000402902" description="Translation factor GUF1, mitochondrial">
    <location>
        <begin position="1"/>
        <end position="645"/>
    </location>
</feature>
<feature type="domain" description="tr-type G">
    <location>
        <begin position="44"/>
        <end position="228"/>
    </location>
</feature>
<feature type="binding site" evidence="1">
    <location>
        <begin position="53"/>
        <end position="60"/>
    </location>
    <ligand>
        <name>GTP</name>
        <dbReference type="ChEBI" id="CHEBI:37565"/>
    </ligand>
</feature>
<feature type="binding site" evidence="1">
    <location>
        <begin position="120"/>
        <end position="124"/>
    </location>
    <ligand>
        <name>GTP</name>
        <dbReference type="ChEBI" id="CHEBI:37565"/>
    </ligand>
</feature>
<feature type="binding site" evidence="1">
    <location>
        <begin position="174"/>
        <end position="177"/>
    </location>
    <ligand>
        <name>GTP</name>
        <dbReference type="ChEBI" id="CHEBI:37565"/>
    </ligand>
</feature>
<proteinExistence type="inferred from homology"/>